<proteinExistence type="inferred from homology"/>
<organism>
    <name type="scientific">Thermoplasma acidophilum (strain ATCC 25905 / DSM 1728 / JCM 9062 / NBRC 15155 / AMRC-C165)</name>
    <dbReference type="NCBI Taxonomy" id="273075"/>
    <lineage>
        <taxon>Archaea</taxon>
        <taxon>Methanobacteriati</taxon>
        <taxon>Thermoplasmatota</taxon>
        <taxon>Thermoplasmata</taxon>
        <taxon>Thermoplasmatales</taxon>
        <taxon>Thermoplasmataceae</taxon>
        <taxon>Thermoplasma</taxon>
    </lineage>
</organism>
<dbReference type="EC" id="6.1.1.16" evidence="1"/>
<dbReference type="EMBL" id="AL445066">
    <property type="protein sequence ID" value="CAC12272.1"/>
    <property type="molecule type" value="Genomic_DNA"/>
</dbReference>
<dbReference type="RefSeq" id="WP_010901555.1">
    <property type="nucleotide sequence ID" value="NC_002578.1"/>
</dbReference>
<dbReference type="SMR" id="Q9HJ27"/>
<dbReference type="FunCoup" id="Q9HJ27">
    <property type="interactions" value="157"/>
</dbReference>
<dbReference type="STRING" id="273075.gene:9572368"/>
<dbReference type="PaxDb" id="273075-Ta1147"/>
<dbReference type="EnsemblBacteria" id="CAC12272">
    <property type="protein sequence ID" value="CAC12272"/>
    <property type="gene ID" value="CAC12272"/>
</dbReference>
<dbReference type="KEGG" id="tac:Ta1147"/>
<dbReference type="eggNOG" id="arCOG00486">
    <property type="taxonomic scope" value="Archaea"/>
</dbReference>
<dbReference type="HOGENOM" id="CLU_013528_0_1_2"/>
<dbReference type="InParanoid" id="Q9HJ27"/>
<dbReference type="OrthoDB" id="9445at2157"/>
<dbReference type="Proteomes" id="UP000001024">
    <property type="component" value="Chromosome"/>
</dbReference>
<dbReference type="GO" id="GO:0005737">
    <property type="term" value="C:cytoplasm"/>
    <property type="evidence" value="ECO:0007669"/>
    <property type="project" value="UniProtKB-SubCell"/>
</dbReference>
<dbReference type="GO" id="GO:0005524">
    <property type="term" value="F:ATP binding"/>
    <property type="evidence" value="ECO:0007669"/>
    <property type="project" value="UniProtKB-UniRule"/>
</dbReference>
<dbReference type="GO" id="GO:0004817">
    <property type="term" value="F:cysteine-tRNA ligase activity"/>
    <property type="evidence" value="ECO:0007669"/>
    <property type="project" value="UniProtKB-UniRule"/>
</dbReference>
<dbReference type="GO" id="GO:0046872">
    <property type="term" value="F:metal ion binding"/>
    <property type="evidence" value="ECO:0007669"/>
    <property type="project" value="UniProtKB-KW"/>
</dbReference>
<dbReference type="GO" id="GO:0006423">
    <property type="term" value="P:cysteinyl-tRNA aminoacylation"/>
    <property type="evidence" value="ECO:0007669"/>
    <property type="project" value="UniProtKB-UniRule"/>
</dbReference>
<dbReference type="CDD" id="cd00672">
    <property type="entry name" value="CysRS_core"/>
    <property type="match status" value="1"/>
</dbReference>
<dbReference type="FunFam" id="3.40.50.620:FF:000130">
    <property type="entry name" value="Cysteine--tRNA ligase"/>
    <property type="match status" value="1"/>
</dbReference>
<dbReference type="Gene3D" id="1.20.120.1910">
    <property type="entry name" value="Cysteine-tRNA ligase, C-terminal anti-codon recognition domain"/>
    <property type="match status" value="1"/>
</dbReference>
<dbReference type="Gene3D" id="3.40.50.620">
    <property type="entry name" value="HUPs"/>
    <property type="match status" value="1"/>
</dbReference>
<dbReference type="HAMAP" id="MF_00041">
    <property type="entry name" value="Cys_tRNA_synth"/>
    <property type="match status" value="1"/>
</dbReference>
<dbReference type="InterPro" id="IPR015803">
    <property type="entry name" value="Cys-tRNA-ligase"/>
</dbReference>
<dbReference type="InterPro" id="IPR024909">
    <property type="entry name" value="Cys-tRNA/MSH_ligase"/>
</dbReference>
<dbReference type="InterPro" id="IPR014729">
    <property type="entry name" value="Rossmann-like_a/b/a_fold"/>
</dbReference>
<dbReference type="InterPro" id="IPR032678">
    <property type="entry name" value="tRNA-synt_1_cat_dom"/>
</dbReference>
<dbReference type="InterPro" id="IPR009080">
    <property type="entry name" value="tRNAsynth_Ia_anticodon-bd"/>
</dbReference>
<dbReference type="NCBIfam" id="TIGR00435">
    <property type="entry name" value="cysS"/>
    <property type="match status" value="1"/>
</dbReference>
<dbReference type="PANTHER" id="PTHR10890:SF3">
    <property type="entry name" value="CYSTEINE--TRNA LIGASE, CYTOPLASMIC"/>
    <property type="match status" value="1"/>
</dbReference>
<dbReference type="PANTHER" id="PTHR10890">
    <property type="entry name" value="CYSTEINYL-TRNA SYNTHETASE"/>
    <property type="match status" value="1"/>
</dbReference>
<dbReference type="Pfam" id="PF01406">
    <property type="entry name" value="tRNA-synt_1e"/>
    <property type="match status" value="1"/>
</dbReference>
<dbReference type="PRINTS" id="PR00983">
    <property type="entry name" value="TRNASYNTHCYS"/>
</dbReference>
<dbReference type="SUPFAM" id="SSF47323">
    <property type="entry name" value="Anticodon-binding domain of a subclass of class I aminoacyl-tRNA synthetases"/>
    <property type="match status" value="1"/>
</dbReference>
<dbReference type="SUPFAM" id="SSF52374">
    <property type="entry name" value="Nucleotidylyl transferase"/>
    <property type="match status" value="1"/>
</dbReference>
<name>SYC_THEAC</name>
<feature type="chain" id="PRO_0000159548" description="Cysteine--tRNA ligase">
    <location>
        <begin position="1"/>
        <end position="452"/>
    </location>
</feature>
<feature type="short sequence motif" description="'HIGH' region">
    <location>
        <begin position="29"/>
        <end position="39"/>
    </location>
</feature>
<feature type="short sequence motif" description="'KMSKS' region">
    <location>
        <begin position="265"/>
        <end position="269"/>
    </location>
</feature>
<feature type="binding site" evidence="1">
    <location>
        <position position="27"/>
    </location>
    <ligand>
        <name>Zn(2+)</name>
        <dbReference type="ChEBI" id="CHEBI:29105"/>
    </ligand>
</feature>
<feature type="binding site" evidence="1">
    <location>
        <position position="207"/>
    </location>
    <ligand>
        <name>Zn(2+)</name>
        <dbReference type="ChEBI" id="CHEBI:29105"/>
    </ligand>
</feature>
<feature type="binding site" evidence="1">
    <location>
        <position position="232"/>
    </location>
    <ligand>
        <name>Zn(2+)</name>
        <dbReference type="ChEBI" id="CHEBI:29105"/>
    </ligand>
</feature>
<feature type="binding site" evidence="1">
    <location>
        <position position="236"/>
    </location>
    <ligand>
        <name>Zn(2+)</name>
        <dbReference type="ChEBI" id="CHEBI:29105"/>
    </ligand>
</feature>
<feature type="binding site" evidence="1">
    <location>
        <position position="268"/>
    </location>
    <ligand>
        <name>ATP</name>
        <dbReference type="ChEBI" id="CHEBI:30616"/>
    </ligand>
</feature>
<sequence length="452" mass="52519">MRFYNTLTRDVDEFKEMNSGRINMFVCGPTVQDHFHIGHARTYIFFDAVAKLLRNLGYSVFYLQNITDIDDKIINKAREMNIQPQDVADMYLREFLEDMSALKVTSVNYFAKSTLYINEIISQISRLIEKGYAYETSDGVYFEVSKFADYGQLSNQSLDQIIHGYRVAVNENKRNPEDFVLWKKRKPGEPYWDSPWGPGRPGWHIEDTAITETYFGPEYDIHGGGSDLIFPHHEAEIAQMRAISGRKYLSHYWIHTGMINVNNEKMSKSLKNFVTIREVLKEYRPEDLRYALLNANYRTQLDFSKGLLEESRKQVEYLNSTFRKLVNASGNSDLSADPSAVIKRMVDEATNDFDFRSVFRDLIDFAGDLNKNIESISRPAAQKAIDVFRWVDSFAGILLPETARLSGIIDDLLDLRKNLRTERKFQEADRIRDLLLKNGIHVEDRGDETIWW</sequence>
<comment type="catalytic activity">
    <reaction evidence="1">
        <text>tRNA(Cys) + L-cysteine + ATP = L-cysteinyl-tRNA(Cys) + AMP + diphosphate</text>
        <dbReference type="Rhea" id="RHEA:17773"/>
        <dbReference type="Rhea" id="RHEA-COMP:9661"/>
        <dbReference type="Rhea" id="RHEA-COMP:9679"/>
        <dbReference type="ChEBI" id="CHEBI:30616"/>
        <dbReference type="ChEBI" id="CHEBI:33019"/>
        <dbReference type="ChEBI" id="CHEBI:35235"/>
        <dbReference type="ChEBI" id="CHEBI:78442"/>
        <dbReference type="ChEBI" id="CHEBI:78517"/>
        <dbReference type="ChEBI" id="CHEBI:456215"/>
        <dbReference type="EC" id="6.1.1.16"/>
    </reaction>
</comment>
<comment type="cofactor">
    <cofactor evidence="1">
        <name>Zn(2+)</name>
        <dbReference type="ChEBI" id="CHEBI:29105"/>
    </cofactor>
    <text evidence="1">Binds 1 zinc ion per subunit.</text>
</comment>
<comment type="subcellular location">
    <subcellularLocation>
        <location evidence="1">Cytoplasm</location>
    </subcellularLocation>
</comment>
<comment type="similarity">
    <text evidence="1">Belongs to the class-I aminoacyl-tRNA synthetase family.</text>
</comment>
<protein>
    <recommendedName>
        <fullName evidence="1">Cysteine--tRNA ligase</fullName>
        <ecNumber evidence="1">6.1.1.16</ecNumber>
    </recommendedName>
    <alternativeName>
        <fullName evidence="1">Cysteinyl-tRNA synthetase</fullName>
        <shortName evidence="1">CysRS</shortName>
    </alternativeName>
</protein>
<accession>Q9HJ27</accession>
<evidence type="ECO:0000255" key="1">
    <source>
        <dbReference type="HAMAP-Rule" id="MF_00041"/>
    </source>
</evidence>
<reference key="1">
    <citation type="journal article" date="2000" name="Nature">
        <title>The genome sequence of the thermoacidophilic scavenger Thermoplasma acidophilum.</title>
        <authorList>
            <person name="Ruepp A."/>
            <person name="Graml W."/>
            <person name="Santos-Martinez M.-L."/>
            <person name="Koretke K.K."/>
            <person name="Volker C."/>
            <person name="Mewes H.-W."/>
            <person name="Frishman D."/>
            <person name="Stocker S."/>
            <person name="Lupas A.N."/>
            <person name="Baumeister W."/>
        </authorList>
    </citation>
    <scope>NUCLEOTIDE SEQUENCE [LARGE SCALE GENOMIC DNA]</scope>
    <source>
        <strain>ATCC 25905 / DSM 1728 / JCM 9062 / NBRC 15155 / AMRC-C165</strain>
    </source>
</reference>
<keyword id="KW-0030">Aminoacyl-tRNA synthetase</keyword>
<keyword id="KW-0067">ATP-binding</keyword>
<keyword id="KW-0963">Cytoplasm</keyword>
<keyword id="KW-0436">Ligase</keyword>
<keyword id="KW-0479">Metal-binding</keyword>
<keyword id="KW-0547">Nucleotide-binding</keyword>
<keyword id="KW-0648">Protein biosynthesis</keyword>
<keyword id="KW-1185">Reference proteome</keyword>
<keyword id="KW-0862">Zinc</keyword>
<gene>
    <name evidence="1" type="primary">cysS</name>
    <name type="ordered locus">Ta1147</name>
</gene>